<keyword id="KW-0249">Electron transport</keyword>
<keyword id="KW-0349">Heme</keyword>
<keyword id="KW-0408">Iron</keyword>
<keyword id="KW-0472">Membrane</keyword>
<keyword id="KW-0479">Metal-binding</keyword>
<keyword id="KW-0496">Mitochondrion</keyword>
<keyword id="KW-0999">Mitochondrion inner membrane</keyword>
<keyword id="KW-0679">Respiratory chain</keyword>
<keyword id="KW-0812">Transmembrane</keyword>
<keyword id="KW-1133">Transmembrane helix</keyword>
<keyword id="KW-0813">Transport</keyword>
<keyword id="KW-0830">Ubiquinone</keyword>
<geneLocation type="mitochondrion"/>
<accession>Q9ZZT6</accession>
<reference key="1">
    <citation type="journal article" date="1999" name="J. Mammal. Evol.">
        <title>Systematic position of the African dormouse Graphiurus (Rodentia, Gliridae) assessed from cytochrome b and 12s rRNA mitochondrial genes.</title>
        <authorList>
            <person name="Bentz S."/>
            <person name="Montgelard C."/>
        </authorList>
    </citation>
    <scope>NUCLEOTIDE SEQUENCE [GENOMIC DNA]</scope>
    <source>
        <strain>Isolate E-4867</strain>
    </source>
</reference>
<evidence type="ECO:0000250" key="1"/>
<evidence type="ECO:0000250" key="2">
    <source>
        <dbReference type="UniProtKB" id="P00157"/>
    </source>
</evidence>
<evidence type="ECO:0000255" key="3">
    <source>
        <dbReference type="PROSITE-ProRule" id="PRU00967"/>
    </source>
</evidence>
<evidence type="ECO:0000255" key="4">
    <source>
        <dbReference type="PROSITE-ProRule" id="PRU00968"/>
    </source>
</evidence>
<name>CYB_GLIGL</name>
<proteinExistence type="inferred from homology"/>
<gene>
    <name type="primary">MT-CYB</name>
    <name type="synonym">COB</name>
    <name type="synonym">CYTB</name>
    <name type="synonym">MTCYB</name>
</gene>
<protein>
    <recommendedName>
        <fullName>Cytochrome b</fullName>
    </recommendedName>
    <alternativeName>
        <fullName>Complex III subunit 3</fullName>
    </alternativeName>
    <alternativeName>
        <fullName>Complex III subunit III</fullName>
    </alternativeName>
    <alternativeName>
        <fullName>Cytochrome b-c1 complex subunit 3</fullName>
    </alternativeName>
    <alternativeName>
        <fullName>Ubiquinol-cytochrome-c reductase complex cytochrome b subunit</fullName>
    </alternativeName>
</protein>
<dbReference type="EMBL" id="AJ225031">
    <property type="protein sequence ID" value="CAA12362.1"/>
    <property type="molecule type" value="Genomic_DNA"/>
</dbReference>
<dbReference type="SMR" id="Q9ZZT6"/>
<dbReference type="GO" id="GO:0005743">
    <property type="term" value="C:mitochondrial inner membrane"/>
    <property type="evidence" value="ECO:0007669"/>
    <property type="project" value="UniProtKB-SubCell"/>
</dbReference>
<dbReference type="GO" id="GO:0045275">
    <property type="term" value="C:respiratory chain complex III"/>
    <property type="evidence" value="ECO:0007669"/>
    <property type="project" value="InterPro"/>
</dbReference>
<dbReference type="GO" id="GO:0046872">
    <property type="term" value="F:metal ion binding"/>
    <property type="evidence" value="ECO:0007669"/>
    <property type="project" value="UniProtKB-KW"/>
</dbReference>
<dbReference type="GO" id="GO:0008121">
    <property type="term" value="F:ubiquinol-cytochrome-c reductase activity"/>
    <property type="evidence" value="ECO:0007669"/>
    <property type="project" value="InterPro"/>
</dbReference>
<dbReference type="GO" id="GO:0006122">
    <property type="term" value="P:mitochondrial electron transport, ubiquinol to cytochrome c"/>
    <property type="evidence" value="ECO:0007669"/>
    <property type="project" value="TreeGrafter"/>
</dbReference>
<dbReference type="CDD" id="cd00290">
    <property type="entry name" value="cytochrome_b_C"/>
    <property type="match status" value="1"/>
</dbReference>
<dbReference type="CDD" id="cd00284">
    <property type="entry name" value="Cytochrome_b_N"/>
    <property type="match status" value="1"/>
</dbReference>
<dbReference type="FunFam" id="1.20.810.10:FF:000002">
    <property type="entry name" value="Cytochrome b"/>
    <property type="match status" value="1"/>
</dbReference>
<dbReference type="Gene3D" id="1.20.810.10">
    <property type="entry name" value="Cytochrome Bc1 Complex, Chain C"/>
    <property type="match status" value="1"/>
</dbReference>
<dbReference type="InterPro" id="IPR005798">
    <property type="entry name" value="Cyt_b/b6_C"/>
</dbReference>
<dbReference type="InterPro" id="IPR036150">
    <property type="entry name" value="Cyt_b/b6_C_sf"/>
</dbReference>
<dbReference type="InterPro" id="IPR005797">
    <property type="entry name" value="Cyt_b/b6_N"/>
</dbReference>
<dbReference type="InterPro" id="IPR027387">
    <property type="entry name" value="Cytb/b6-like_sf"/>
</dbReference>
<dbReference type="InterPro" id="IPR030689">
    <property type="entry name" value="Cytochrome_b"/>
</dbReference>
<dbReference type="InterPro" id="IPR048260">
    <property type="entry name" value="Cytochrome_b_C_euk/bac"/>
</dbReference>
<dbReference type="InterPro" id="IPR048259">
    <property type="entry name" value="Cytochrome_b_N_euk/bac"/>
</dbReference>
<dbReference type="InterPro" id="IPR016174">
    <property type="entry name" value="Di-haem_cyt_TM"/>
</dbReference>
<dbReference type="PANTHER" id="PTHR19271">
    <property type="entry name" value="CYTOCHROME B"/>
    <property type="match status" value="1"/>
</dbReference>
<dbReference type="PANTHER" id="PTHR19271:SF16">
    <property type="entry name" value="CYTOCHROME B"/>
    <property type="match status" value="1"/>
</dbReference>
<dbReference type="Pfam" id="PF00032">
    <property type="entry name" value="Cytochrom_B_C"/>
    <property type="match status" value="1"/>
</dbReference>
<dbReference type="Pfam" id="PF00033">
    <property type="entry name" value="Cytochrome_B"/>
    <property type="match status" value="1"/>
</dbReference>
<dbReference type="PIRSF" id="PIRSF038885">
    <property type="entry name" value="COB"/>
    <property type="match status" value="1"/>
</dbReference>
<dbReference type="SUPFAM" id="SSF81648">
    <property type="entry name" value="a domain/subunit of cytochrome bc1 complex (Ubiquinol-cytochrome c reductase)"/>
    <property type="match status" value="1"/>
</dbReference>
<dbReference type="SUPFAM" id="SSF81342">
    <property type="entry name" value="Transmembrane di-heme cytochromes"/>
    <property type="match status" value="1"/>
</dbReference>
<dbReference type="PROSITE" id="PS51003">
    <property type="entry name" value="CYTB_CTER"/>
    <property type="match status" value="1"/>
</dbReference>
<dbReference type="PROSITE" id="PS51002">
    <property type="entry name" value="CYTB_NTER"/>
    <property type="match status" value="1"/>
</dbReference>
<feature type="chain" id="PRO_0000227673" description="Cytochrome b">
    <location>
        <begin position="1"/>
        <end position="379"/>
    </location>
</feature>
<feature type="transmembrane region" description="Helical" evidence="2">
    <location>
        <begin position="33"/>
        <end position="53"/>
    </location>
</feature>
<feature type="transmembrane region" description="Helical" evidence="2">
    <location>
        <begin position="77"/>
        <end position="98"/>
    </location>
</feature>
<feature type="transmembrane region" description="Helical" evidence="2">
    <location>
        <begin position="113"/>
        <end position="133"/>
    </location>
</feature>
<feature type="transmembrane region" description="Helical" evidence="2">
    <location>
        <begin position="178"/>
        <end position="198"/>
    </location>
</feature>
<feature type="transmembrane region" description="Helical" evidence="2">
    <location>
        <begin position="226"/>
        <end position="246"/>
    </location>
</feature>
<feature type="transmembrane region" description="Helical" evidence="2">
    <location>
        <begin position="288"/>
        <end position="308"/>
    </location>
</feature>
<feature type="transmembrane region" description="Helical" evidence="2">
    <location>
        <begin position="320"/>
        <end position="340"/>
    </location>
</feature>
<feature type="transmembrane region" description="Helical" evidence="2">
    <location>
        <begin position="347"/>
        <end position="367"/>
    </location>
</feature>
<feature type="binding site" description="axial binding residue" evidence="2">
    <location>
        <position position="83"/>
    </location>
    <ligand>
        <name>heme b</name>
        <dbReference type="ChEBI" id="CHEBI:60344"/>
        <label>b562</label>
    </ligand>
    <ligandPart>
        <name>Fe</name>
        <dbReference type="ChEBI" id="CHEBI:18248"/>
    </ligandPart>
</feature>
<feature type="binding site" description="axial binding residue" evidence="2">
    <location>
        <position position="97"/>
    </location>
    <ligand>
        <name>heme b</name>
        <dbReference type="ChEBI" id="CHEBI:60344"/>
        <label>b566</label>
    </ligand>
    <ligandPart>
        <name>Fe</name>
        <dbReference type="ChEBI" id="CHEBI:18248"/>
    </ligandPart>
</feature>
<feature type="binding site" description="axial binding residue" evidence="2">
    <location>
        <position position="182"/>
    </location>
    <ligand>
        <name>heme b</name>
        <dbReference type="ChEBI" id="CHEBI:60344"/>
        <label>b562</label>
    </ligand>
    <ligandPart>
        <name>Fe</name>
        <dbReference type="ChEBI" id="CHEBI:18248"/>
    </ligandPart>
</feature>
<feature type="binding site" description="axial binding residue" evidence="2">
    <location>
        <position position="196"/>
    </location>
    <ligand>
        <name>heme b</name>
        <dbReference type="ChEBI" id="CHEBI:60344"/>
        <label>b566</label>
    </ligand>
    <ligandPart>
        <name>Fe</name>
        <dbReference type="ChEBI" id="CHEBI:18248"/>
    </ligandPart>
</feature>
<feature type="binding site" evidence="2">
    <location>
        <position position="201"/>
    </location>
    <ligand>
        <name>a ubiquinone</name>
        <dbReference type="ChEBI" id="CHEBI:16389"/>
    </ligand>
</feature>
<comment type="function">
    <text evidence="2">Component of the ubiquinol-cytochrome c reductase complex (complex III or cytochrome b-c1 complex) that is part of the mitochondrial respiratory chain. The b-c1 complex mediates electron transfer from ubiquinol to cytochrome c. Contributes to the generation of a proton gradient across the mitochondrial membrane that is then used for ATP synthesis.</text>
</comment>
<comment type="cofactor">
    <cofactor evidence="2">
        <name>heme b</name>
        <dbReference type="ChEBI" id="CHEBI:60344"/>
    </cofactor>
    <text evidence="2">Binds 2 heme b groups non-covalently.</text>
</comment>
<comment type="subunit">
    <text evidence="2">The cytochrome bc1 complex contains 11 subunits: 3 respiratory subunits (MT-CYB, CYC1 and UQCRFS1), 2 core proteins (UQCRC1 and UQCRC2) and 6 low-molecular weight proteins (UQCRH/QCR6, UQCRB/QCR7, UQCRQ/QCR8, UQCR10/QCR9, UQCR11/QCR10 and a cleavage product of UQCRFS1). This cytochrome bc1 complex then forms a dimer.</text>
</comment>
<comment type="subcellular location">
    <subcellularLocation>
        <location evidence="2">Mitochondrion inner membrane</location>
        <topology evidence="2">Multi-pass membrane protein</topology>
    </subcellularLocation>
</comment>
<comment type="miscellaneous">
    <text evidence="1">Heme 1 (or BL or b562) is low-potential and absorbs at about 562 nm, and heme 2 (or BH or b566) is high-potential and absorbs at about 566 nm.</text>
</comment>
<comment type="similarity">
    <text evidence="3 4">Belongs to the cytochrome b family.</text>
</comment>
<comment type="caution">
    <text evidence="2">The full-length protein contains only eight transmembrane helices, not nine as predicted by bioinformatics tools.</text>
</comment>
<sequence>MTNIRKSHPLIKIINHSFIDLPTPSNISAWWNFGSLLGACLGIQILTGLFLAMHYTSDTMTAFSSVTHICRDVNYGWLIRYMHANGASMFFICLFLHVGRGMYYGSYMFIETWNIGIILLFTVMATAFMGYVLSWGQMSFWGATVITNLLSAIPYIGTTLVEWIWGGFSVDKATLTRFFGFHFILPFIIAALVMVHLLFLHETGSNNPSGLNSDTDKIPFHPYFTIKDILGLLLLIFLLMTLVLFSPDLLGDPDNYTPANPLSTPPHIKPEWYFLFAYAILRSIPNKLGGVLALVFSILILAILPVLQFSKQRSMMFRPLSQCLFWILTADLFTLTWIGGQPVEHPFIIIGQLASILYFSIILFFLPTFSLLENKLLKW</sequence>
<organism>
    <name type="scientific">Glis glis</name>
    <name type="common">Fat dormouse</name>
    <name type="synonym">Myoxus glis</name>
    <dbReference type="NCBI Taxonomy" id="41261"/>
    <lineage>
        <taxon>Eukaryota</taxon>
        <taxon>Metazoa</taxon>
        <taxon>Chordata</taxon>
        <taxon>Craniata</taxon>
        <taxon>Vertebrata</taxon>
        <taxon>Euteleostomi</taxon>
        <taxon>Mammalia</taxon>
        <taxon>Eutheria</taxon>
        <taxon>Euarchontoglires</taxon>
        <taxon>Glires</taxon>
        <taxon>Rodentia</taxon>
        <taxon>Sciuromorpha</taxon>
        <taxon>Gliridae</taxon>
        <taxon>Glirinae</taxon>
        <taxon>Glis</taxon>
    </lineage>
</organism>